<dbReference type="EMBL" id="CP000133">
    <property type="protein sequence ID" value="ABC90458.1"/>
    <property type="molecule type" value="Genomic_DNA"/>
</dbReference>
<dbReference type="RefSeq" id="WP_009985507.1">
    <property type="nucleotide sequence ID" value="NC_007761.1"/>
</dbReference>
<dbReference type="SMR" id="Q2K9M8"/>
<dbReference type="GeneID" id="66141419"/>
<dbReference type="KEGG" id="ret:RHE_CH01663"/>
<dbReference type="eggNOG" id="COG0080">
    <property type="taxonomic scope" value="Bacteria"/>
</dbReference>
<dbReference type="HOGENOM" id="CLU_074237_2_0_5"/>
<dbReference type="OrthoDB" id="9802408at2"/>
<dbReference type="Proteomes" id="UP000001936">
    <property type="component" value="Chromosome"/>
</dbReference>
<dbReference type="GO" id="GO:0022625">
    <property type="term" value="C:cytosolic large ribosomal subunit"/>
    <property type="evidence" value="ECO:0007669"/>
    <property type="project" value="TreeGrafter"/>
</dbReference>
<dbReference type="GO" id="GO:0070180">
    <property type="term" value="F:large ribosomal subunit rRNA binding"/>
    <property type="evidence" value="ECO:0007669"/>
    <property type="project" value="UniProtKB-UniRule"/>
</dbReference>
<dbReference type="GO" id="GO:0003735">
    <property type="term" value="F:structural constituent of ribosome"/>
    <property type="evidence" value="ECO:0007669"/>
    <property type="project" value="InterPro"/>
</dbReference>
<dbReference type="GO" id="GO:0006412">
    <property type="term" value="P:translation"/>
    <property type="evidence" value="ECO:0007669"/>
    <property type="project" value="UniProtKB-UniRule"/>
</dbReference>
<dbReference type="CDD" id="cd00349">
    <property type="entry name" value="Ribosomal_L11"/>
    <property type="match status" value="1"/>
</dbReference>
<dbReference type="FunFam" id="3.30.1550.10:FF:000001">
    <property type="entry name" value="50S ribosomal protein L11"/>
    <property type="match status" value="1"/>
</dbReference>
<dbReference type="Gene3D" id="1.10.10.250">
    <property type="entry name" value="Ribosomal protein L11, C-terminal domain"/>
    <property type="match status" value="1"/>
</dbReference>
<dbReference type="Gene3D" id="3.30.1550.10">
    <property type="entry name" value="Ribosomal protein L11/L12, N-terminal domain"/>
    <property type="match status" value="1"/>
</dbReference>
<dbReference type="HAMAP" id="MF_00736">
    <property type="entry name" value="Ribosomal_uL11"/>
    <property type="match status" value="1"/>
</dbReference>
<dbReference type="InterPro" id="IPR000911">
    <property type="entry name" value="Ribosomal_uL11"/>
</dbReference>
<dbReference type="InterPro" id="IPR006519">
    <property type="entry name" value="Ribosomal_uL11_bac-typ"/>
</dbReference>
<dbReference type="InterPro" id="IPR020783">
    <property type="entry name" value="Ribosomal_uL11_C"/>
</dbReference>
<dbReference type="InterPro" id="IPR036769">
    <property type="entry name" value="Ribosomal_uL11_C_sf"/>
</dbReference>
<dbReference type="InterPro" id="IPR020784">
    <property type="entry name" value="Ribosomal_uL11_N"/>
</dbReference>
<dbReference type="InterPro" id="IPR036796">
    <property type="entry name" value="Ribosomal_uL11_N_sf"/>
</dbReference>
<dbReference type="NCBIfam" id="TIGR01632">
    <property type="entry name" value="L11_bact"/>
    <property type="match status" value="1"/>
</dbReference>
<dbReference type="PANTHER" id="PTHR11661">
    <property type="entry name" value="60S RIBOSOMAL PROTEIN L12"/>
    <property type="match status" value="1"/>
</dbReference>
<dbReference type="PANTHER" id="PTHR11661:SF1">
    <property type="entry name" value="LARGE RIBOSOMAL SUBUNIT PROTEIN UL11M"/>
    <property type="match status" value="1"/>
</dbReference>
<dbReference type="Pfam" id="PF00298">
    <property type="entry name" value="Ribosomal_L11"/>
    <property type="match status" value="1"/>
</dbReference>
<dbReference type="Pfam" id="PF03946">
    <property type="entry name" value="Ribosomal_L11_N"/>
    <property type="match status" value="1"/>
</dbReference>
<dbReference type="SMART" id="SM00649">
    <property type="entry name" value="RL11"/>
    <property type="match status" value="1"/>
</dbReference>
<dbReference type="SUPFAM" id="SSF54747">
    <property type="entry name" value="Ribosomal L11/L12e N-terminal domain"/>
    <property type="match status" value="1"/>
</dbReference>
<dbReference type="SUPFAM" id="SSF46906">
    <property type="entry name" value="Ribosomal protein L11, C-terminal domain"/>
    <property type="match status" value="1"/>
</dbReference>
<keyword id="KW-0488">Methylation</keyword>
<keyword id="KW-1185">Reference proteome</keyword>
<keyword id="KW-0687">Ribonucleoprotein</keyword>
<keyword id="KW-0689">Ribosomal protein</keyword>
<keyword id="KW-0694">RNA-binding</keyword>
<keyword id="KW-0699">rRNA-binding</keyword>
<organism>
    <name type="scientific">Rhizobium etli (strain ATCC 51251 / DSM 11541 / JCM 21823 / NBRC 15573 / CFN 42)</name>
    <dbReference type="NCBI Taxonomy" id="347834"/>
    <lineage>
        <taxon>Bacteria</taxon>
        <taxon>Pseudomonadati</taxon>
        <taxon>Pseudomonadota</taxon>
        <taxon>Alphaproteobacteria</taxon>
        <taxon>Hyphomicrobiales</taxon>
        <taxon>Rhizobiaceae</taxon>
        <taxon>Rhizobium/Agrobacterium group</taxon>
        <taxon>Rhizobium</taxon>
    </lineage>
</organism>
<proteinExistence type="inferred from homology"/>
<sequence length="143" mass="15119">MAKKVAGQLKLQVKAGSANPSPPIGPALGQRGINIMEFCKAFNAATQEMEKGMPIPVVITYYQDKSFTFAMKQPPVSYWLKKEAKITSGSKTPGKGAKAGTLTKAQIKTIAEAKMKDLNAADIEGAMAMIEGSARAMGLEVVG</sequence>
<reference key="1">
    <citation type="journal article" date="2006" name="Proc. Natl. Acad. Sci. U.S.A.">
        <title>The partitioned Rhizobium etli genome: genetic and metabolic redundancy in seven interacting replicons.</title>
        <authorList>
            <person name="Gonzalez V."/>
            <person name="Santamaria R.I."/>
            <person name="Bustos P."/>
            <person name="Hernandez-Gonzalez I."/>
            <person name="Medrano-Soto A."/>
            <person name="Moreno-Hagelsieb G."/>
            <person name="Janga S.C."/>
            <person name="Ramirez M.A."/>
            <person name="Jimenez-Jacinto V."/>
            <person name="Collado-Vides J."/>
            <person name="Davila G."/>
        </authorList>
    </citation>
    <scope>NUCLEOTIDE SEQUENCE [LARGE SCALE GENOMIC DNA]</scope>
    <source>
        <strain>ATCC 51251 / DSM 11541 / JCM 21823 / NBRC 15573 / CFN 42</strain>
    </source>
</reference>
<protein>
    <recommendedName>
        <fullName evidence="1">Large ribosomal subunit protein uL11</fullName>
    </recommendedName>
    <alternativeName>
        <fullName evidence="2">50S ribosomal protein L11</fullName>
    </alternativeName>
</protein>
<feature type="chain" id="PRO_0000258195" description="Large ribosomal subunit protein uL11">
    <location>
        <begin position="1"/>
        <end position="143"/>
    </location>
</feature>
<name>RL11_RHIEC</name>
<comment type="function">
    <text evidence="1">Forms part of the ribosomal stalk which helps the ribosome interact with GTP-bound translation factors.</text>
</comment>
<comment type="subunit">
    <text evidence="1">Part of the ribosomal stalk of the 50S ribosomal subunit. Interacts with L10 and the large rRNA to form the base of the stalk. L10 forms an elongated spine to which L12 dimers bind in a sequential fashion forming a multimeric L10(L12)X complex.</text>
</comment>
<comment type="PTM">
    <text evidence="1">One or more lysine residues are methylated.</text>
</comment>
<comment type="similarity">
    <text evidence="1">Belongs to the universal ribosomal protein uL11 family.</text>
</comment>
<gene>
    <name evidence="1" type="primary">rplK</name>
    <name type="ordered locus">RHE_CH01663</name>
</gene>
<evidence type="ECO:0000255" key="1">
    <source>
        <dbReference type="HAMAP-Rule" id="MF_00736"/>
    </source>
</evidence>
<evidence type="ECO:0000305" key="2"/>
<accession>Q2K9M8</accession>